<accession>A6UQT9</accession>
<comment type="subunit">
    <text evidence="1">Part of the 30S ribosomal subunit.</text>
</comment>
<comment type="similarity">
    <text evidence="1">Belongs to the eukaryotic ribosomal protein eS8 family.</text>
</comment>
<protein>
    <recommendedName>
        <fullName evidence="1">Small ribosomal subunit protein eS8</fullName>
    </recommendedName>
    <alternativeName>
        <fullName evidence="2">30S ribosomal protein S8e</fullName>
    </alternativeName>
</protein>
<dbReference type="EMBL" id="CP000742">
    <property type="protein sequence ID" value="ABR54861.1"/>
    <property type="molecule type" value="Genomic_DNA"/>
</dbReference>
<dbReference type="RefSeq" id="WP_012065790.1">
    <property type="nucleotide sequence ID" value="NC_009634.1"/>
</dbReference>
<dbReference type="SMR" id="A6UQT9"/>
<dbReference type="STRING" id="406327.Mevan_0958"/>
<dbReference type="GeneID" id="5325898"/>
<dbReference type="KEGG" id="mvn:Mevan_0958"/>
<dbReference type="eggNOG" id="arCOG04154">
    <property type="taxonomic scope" value="Archaea"/>
</dbReference>
<dbReference type="HOGENOM" id="CLU_080597_2_1_2"/>
<dbReference type="OrthoDB" id="372305at2157"/>
<dbReference type="Proteomes" id="UP000001107">
    <property type="component" value="Chromosome"/>
</dbReference>
<dbReference type="GO" id="GO:1990904">
    <property type="term" value="C:ribonucleoprotein complex"/>
    <property type="evidence" value="ECO:0007669"/>
    <property type="project" value="UniProtKB-KW"/>
</dbReference>
<dbReference type="GO" id="GO:0005840">
    <property type="term" value="C:ribosome"/>
    <property type="evidence" value="ECO:0007669"/>
    <property type="project" value="UniProtKB-KW"/>
</dbReference>
<dbReference type="GO" id="GO:0003735">
    <property type="term" value="F:structural constituent of ribosome"/>
    <property type="evidence" value="ECO:0007669"/>
    <property type="project" value="InterPro"/>
</dbReference>
<dbReference type="GO" id="GO:0006412">
    <property type="term" value="P:translation"/>
    <property type="evidence" value="ECO:0007669"/>
    <property type="project" value="UniProtKB-UniRule"/>
</dbReference>
<dbReference type="CDD" id="cd11382">
    <property type="entry name" value="Ribosomal_S8e"/>
    <property type="match status" value="1"/>
</dbReference>
<dbReference type="FunFam" id="2.40.10.310:FF:000002">
    <property type="entry name" value="30S ribosomal protein S8e"/>
    <property type="match status" value="1"/>
</dbReference>
<dbReference type="Gene3D" id="2.40.10.310">
    <property type="match status" value="1"/>
</dbReference>
<dbReference type="HAMAP" id="MF_00029">
    <property type="entry name" value="Ribosomal_eS8"/>
    <property type="match status" value="1"/>
</dbReference>
<dbReference type="InterPro" id="IPR001047">
    <property type="entry name" value="Ribosomal_eS8"/>
</dbReference>
<dbReference type="InterPro" id="IPR020919">
    <property type="entry name" value="Ribosomal_protein_eS8_arc"/>
</dbReference>
<dbReference type="InterPro" id="IPR022309">
    <property type="entry name" value="Ribosomal_Se8/biogenesis_NSA2"/>
</dbReference>
<dbReference type="NCBIfam" id="TIGR00307">
    <property type="entry name" value="eS8"/>
    <property type="match status" value="1"/>
</dbReference>
<dbReference type="PANTHER" id="PTHR10394">
    <property type="entry name" value="40S RIBOSOMAL PROTEIN S8"/>
    <property type="match status" value="1"/>
</dbReference>
<dbReference type="Pfam" id="PF01201">
    <property type="entry name" value="Ribosomal_S8e"/>
    <property type="match status" value="1"/>
</dbReference>
<proteinExistence type="inferred from homology"/>
<sequence>MAIWQGTSKRKSTGAKLRLVTKKHKREMGRPAVETHISAVIKRKIVRCRGANLKVKLEKTNYANVFDQVNKVCKKVLVTKVIDNKANKHYIRRNVITKGAIIETEMGKAKVTSRPGQDGVVNAVLLSE</sequence>
<keyword id="KW-0687">Ribonucleoprotein</keyword>
<keyword id="KW-0689">Ribosomal protein</keyword>
<evidence type="ECO:0000255" key="1">
    <source>
        <dbReference type="HAMAP-Rule" id="MF_00029"/>
    </source>
</evidence>
<evidence type="ECO:0000305" key="2"/>
<feature type="chain" id="PRO_1000002343" description="Small ribosomal subunit protein eS8">
    <location>
        <begin position="1"/>
        <end position="128"/>
    </location>
</feature>
<organism>
    <name type="scientific">Methanococcus vannielii (strain ATCC 35089 / DSM 1224 / JCM 13029 / OCM 148 / SB)</name>
    <dbReference type="NCBI Taxonomy" id="406327"/>
    <lineage>
        <taxon>Archaea</taxon>
        <taxon>Methanobacteriati</taxon>
        <taxon>Methanobacteriota</taxon>
        <taxon>Methanomada group</taxon>
        <taxon>Methanococci</taxon>
        <taxon>Methanococcales</taxon>
        <taxon>Methanococcaceae</taxon>
        <taxon>Methanococcus</taxon>
    </lineage>
</organism>
<name>RS8E_METVS</name>
<reference key="1">
    <citation type="submission" date="2007-06" db="EMBL/GenBank/DDBJ databases">
        <title>Complete sequence of Methanococcus vannielii SB.</title>
        <authorList>
            <consortium name="US DOE Joint Genome Institute"/>
            <person name="Copeland A."/>
            <person name="Lucas S."/>
            <person name="Lapidus A."/>
            <person name="Barry K."/>
            <person name="Glavina del Rio T."/>
            <person name="Dalin E."/>
            <person name="Tice H."/>
            <person name="Pitluck S."/>
            <person name="Chain P."/>
            <person name="Malfatti S."/>
            <person name="Shin M."/>
            <person name="Vergez L."/>
            <person name="Schmutz J."/>
            <person name="Larimer F."/>
            <person name="Land M."/>
            <person name="Hauser L."/>
            <person name="Kyrpides N."/>
            <person name="Anderson I."/>
            <person name="Sieprawska-Lupa M."/>
            <person name="Whitman W.B."/>
            <person name="Richardson P."/>
        </authorList>
    </citation>
    <scope>NUCLEOTIDE SEQUENCE [LARGE SCALE GENOMIC DNA]</scope>
    <source>
        <strain>ATCC 35089 / DSM 1224 / JCM 13029 / OCM 148 / SB</strain>
    </source>
</reference>
<gene>
    <name evidence="1" type="primary">rps8e</name>
    <name type="ordered locus">Mevan_0958</name>
</gene>